<proteinExistence type="inferred from homology"/>
<evidence type="ECO:0000255" key="1">
    <source>
        <dbReference type="HAMAP-Rule" id="MF_00400"/>
    </source>
</evidence>
<name>MDTK_CROS8</name>
<protein>
    <recommendedName>
        <fullName evidence="1">Multidrug resistance protein MdtK</fullName>
    </recommendedName>
    <alternativeName>
        <fullName evidence="1">Multidrug-efflux transporter</fullName>
    </alternativeName>
</protein>
<organism>
    <name type="scientific">Cronobacter sakazakii (strain ATCC BAA-894)</name>
    <name type="common">Enterobacter sakazakii</name>
    <dbReference type="NCBI Taxonomy" id="290339"/>
    <lineage>
        <taxon>Bacteria</taxon>
        <taxon>Pseudomonadati</taxon>
        <taxon>Pseudomonadota</taxon>
        <taxon>Gammaproteobacteria</taxon>
        <taxon>Enterobacterales</taxon>
        <taxon>Enterobacteriaceae</taxon>
        <taxon>Cronobacter</taxon>
    </lineage>
</organism>
<accession>A7MFC3</accession>
<sequence>MQKYFVEARQLLALAIPVIFAQIAQTSMGVVDTVMAGGYSATDMAAVAIGTSIWLPAILFGHGLLLALTPVIAQLNGSGRRDRIAHQVQQGFVLAGLVSVLIMLVLWNAGYIIHAMHNIDPVLANKAVNYLRALLWGAPGYLFFQVMRNQCEGLAKTTPGMAMGFIGLLVNIPVNYIFIYGHFGMPELGGVGCGVATASVYWVMFFCMRFWVKRAGSMRDIRPEPASRRFDWPVIRRLAQIGMPVALALFFEVTLFAVVALLVSPLGIVDVAGHQIALNFSSLMFVLPMSMSAAVTIRVGFRLGQGSTLEAQTSARTGIIVGICLAVLTALFTVVFREPIALLYNDNPEVVTLASHLMLLAAIYQISDSIQVIGSGVLRGYKDTRSIFFITFIAYWVLGLPSGYILGLTDWVVEPMGPAGFWFGFILGLTSAAIMMMWRMRYLQRQPSETILARAAR</sequence>
<feature type="chain" id="PRO_1000049613" description="Multidrug resistance protein MdtK">
    <location>
        <begin position="1"/>
        <end position="457"/>
    </location>
</feature>
<feature type="transmembrane region" description="Helical" evidence="1">
    <location>
        <begin position="11"/>
        <end position="31"/>
    </location>
</feature>
<feature type="transmembrane region" description="Helical" evidence="1">
    <location>
        <begin position="53"/>
        <end position="73"/>
    </location>
</feature>
<feature type="transmembrane region" description="Helical" evidence="1">
    <location>
        <begin position="93"/>
        <end position="113"/>
    </location>
</feature>
<feature type="transmembrane region" description="Helical" evidence="1">
    <location>
        <begin position="127"/>
        <end position="147"/>
    </location>
</feature>
<feature type="transmembrane region" description="Helical" evidence="1">
    <location>
        <begin position="160"/>
        <end position="180"/>
    </location>
</feature>
<feature type="transmembrane region" description="Helical" evidence="1">
    <location>
        <begin position="188"/>
        <end position="208"/>
    </location>
</feature>
<feature type="transmembrane region" description="Helical" evidence="1">
    <location>
        <begin position="243"/>
        <end position="263"/>
    </location>
</feature>
<feature type="transmembrane region" description="Helical" evidence="1">
    <location>
        <begin position="276"/>
        <end position="296"/>
    </location>
</feature>
<feature type="transmembrane region" description="Helical" evidence="1">
    <location>
        <begin position="316"/>
        <end position="336"/>
    </location>
</feature>
<feature type="transmembrane region" description="Helical" evidence="1">
    <location>
        <begin position="357"/>
        <end position="377"/>
    </location>
</feature>
<feature type="transmembrane region" description="Helical" evidence="1">
    <location>
        <begin position="387"/>
        <end position="407"/>
    </location>
</feature>
<feature type="transmembrane region" description="Helical" evidence="1">
    <location>
        <begin position="418"/>
        <end position="438"/>
    </location>
</feature>
<reference key="1">
    <citation type="journal article" date="2010" name="PLoS ONE">
        <title>Genome sequence of Cronobacter sakazakii BAA-894 and comparative genomic hybridization analysis with other Cronobacter species.</title>
        <authorList>
            <person name="Kucerova E."/>
            <person name="Clifton S.W."/>
            <person name="Xia X.Q."/>
            <person name="Long F."/>
            <person name="Porwollik S."/>
            <person name="Fulton L."/>
            <person name="Fronick C."/>
            <person name="Minx P."/>
            <person name="Kyung K."/>
            <person name="Warren W."/>
            <person name="Fulton R."/>
            <person name="Feng D."/>
            <person name="Wollam A."/>
            <person name="Shah N."/>
            <person name="Bhonagiri V."/>
            <person name="Nash W.E."/>
            <person name="Hallsworth-Pepin K."/>
            <person name="Wilson R.K."/>
            <person name="McClelland M."/>
            <person name="Forsythe S.J."/>
        </authorList>
    </citation>
    <scope>NUCLEOTIDE SEQUENCE [LARGE SCALE GENOMIC DNA]</scope>
    <source>
        <strain>ATCC BAA-894</strain>
    </source>
</reference>
<keyword id="KW-0050">Antiport</keyword>
<keyword id="KW-0997">Cell inner membrane</keyword>
<keyword id="KW-1003">Cell membrane</keyword>
<keyword id="KW-0406">Ion transport</keyword>
<keyword id="KW-0472">Membrane</keyword>
<keyword id="KW-1185">Reference proteome</keyword>
<keyword id="KW-0915">Sodium</keyword>
<keyword id="KW-0739">Sodium transport</keyword>
<keyword id="KW-0812">Transmembrane</keyword>
<keyword id="KW-1133">Transmembrane helix</keyword>
<keyword id="KW-0813">Transport</keyword>
<gene>
    <name evidence="1" type="primary">mdtK</name>
    <name type="ordered locus">ESA_02027</name>
</gene>
<comment type="function">
    <text evidence="1">Multidrug efflux pump that functions probably as a Na(+)/drug antiporter.</text>
</comment>
<comment type="subcellular location">
    <subcellularLocation>
        <location evidence="1">Cell inner membrane</location>
        <topology evidence="1">Multi-pass membrane protein</topology>
    </subcellularLocation>
</comment>
<comment type="similarity">
    <text evidence="1">Belongs to the multi antimicrobial extrusion (MATE) (TC 2.A.66.1) family. MdtK subfamily.</text>
</comment>
<dbReference type="EMBL" id="CP000783">
    <property type="protein sequence ID" value="ABU77280.1"/>
    <property type="molecule type" value="Genomic_DNA"/>
</dbReference>
<dbReference type="RefSeq" id="WP_012124929.1">
    <property type="nucleotide sequence ID" value="NC_009778.1"/>
</dbReference>
<dbReference type="SMR" id="A7MFC3"/>
<dbReference type="KEGG" id="esa:ESA_02027"/>
<dbReference type="PATRIC" id="fig|290339.8.peg.1810"/>
<dbReference type="HOGENOM" id="CLU_012893_6_0_6"/>
<dbReference type="Proteomes" id="UP000000260">
    <property type="component" value="Chromosome"/>
</dbReference>
<dbReference type="GO" id="GO:0005886">
    <property type="term" value="C:plasma membrane"/>
    <property type="evidence" value="ECO:0007669"/>
    <property type="project" value="UniProtKB-SubCell"/>
</dbReference>
<dbReference type="GO" id="GO:0015297">
    <property type="term" value="F:antiporter activity"/>
    <property type="evidence" value="ECO:0007669"/>
    <property type="project" value="UniProtKB-UniRule"/>
</dbReference>
<dbReference type="GO" id="GO:0042910">
    <property type="term" value="F:xenobiotic transmembrane transporter activity"/>
    <property type="evidence" value="ECO:0007669"/>
    <property type="project" value="UniProtKB-UniRule"/>
</dbReference>
<dbReference type="GO" id="GO:0006814">
    <property type="term" value="P:sodium ion transport"/>
    <property type="evidence" value="ECO:0007669"/>
    <property type="project" value="UniProtKB-UniRule"/>
</dbReference>
<dbReference type="GO" id="GO:0006855">
    <property type="term" value="P:xenobiotic transmembrane transport"/>
    <property type="evidence" value="ECO:0007669"/>
    <property type="project" value="UniProtKB-UniRule"/>
</dbReference>
<dbReference type="CDD" id="cd13131">
    <property type="entry name" value="MATE_NorM_like"/>
    <property type="match status" value="1"/>
</dbReference>
<dbReference type="HAMAP" id="MF_00400">
    <property type="entry name" value="MdtK"/>
    <property type="match status" value="1"/>
</dbReference>
<dbReference type="InterPro" id="IPR002528">
    <property type="entry name" value="MATE_fam"/>
</dbReference>
<dbReference type="InterPro" id="IPR050222">
    <property type="entry name" value="MATE_MdtK"/>
</dbReference>
<dbReference type="InterPro" id="IPR048279">
    <property type="entry name" value="MdtK-like"/>
</dbReference>
<dbReference type="InterPro" id="IPR022913">
    <property type="entry name" value="Multidrug-R_MdtK"/>
</dbReference>
<dbReference type="NCBIfam" id="TIGR00797">
    <property type="entry name" value="matE"/>
    <property type="match status" value="1"/>
</dbReference>
<dbReference type="PANTHER" id="PTHR43298:SF2">
    <property type="entry name" value="FMN_FAD EXPORTER YEEO-RELATED"/>
    <property type="match status" value="1"/>
</dbReference>
<dbReference type="PANTHER" id="PTHR43298">
    <property type="entry name" value="MULTIDRUG RESISTANCE PROTEIN NORM-RELATED"/>
    <property type="match status" value="1"/>
</dbReference>
<dbReference type="Pfam" id="PF01554">
    <property type="entry name" value="MatE"/>
    <property type="match status" value="2"/>
</dbReference>
<dbReference type="PIRSF" id="PIRSF006603">
    <property type="entry name" value="DinF"/>
    <property type="match status" value="1"/>
</dbReference>